<evidence type="ECO:0000255" key="1">
    <source>
        <dbReference type="HAMAP-Rule" id="MF_01393"/>
    </source>
</evidence>
<comment type="function">
    <text evidence="1">Key component of the proton channel; it plays a direct role in the translocation of protons across the membrane.</text>
</comment>
<comment type="subunit">
    <text evidence="1">F-type ATPases have 2 components, CF(1) - the catalytic core - and CF(0) - the membrane proton channel. CF(1) has five subunits: alpha(3), beta(3), gamma(1), delta(1), epsilon(1). CF(0) has three main subunits: a(1), b(2) and c(9-12). The alpha and beta chains form an alternating ring which encloses part of the gamma chain. CF(1) is attached to CF(0) by a central stalk formed by the gamma and epsilon chains, while a peripheral stalk is formed by the delta and b chains.</text>
</comment>
<comment type="subcellular location">
    <subcellularLocation>
        <location evidence="1">Cell membrane</location>
        <topology evidence="1">Multi-pass membrane protein</topology>
    </subcellularLocation>
</comment>
<comment type="similarity">
    <text evidence="1">Belongs to the ATPase A chain family.</text>
</comment>
<accession>A8YY76</accession>
<dbReference type="EMBL" id="CP000730">
    <property type="protein sequence ID" value="ABX30096.1"/>
    <property type="molecule type" value="Genomic_DNA"/>
</dbReference>
<dbReference type="RefSeq" id="WP_000349655.1">
    <property type="nucleotide sequence ID" value="NC_010079.1"/>
</dbReference>
<dbReference type="SMR" id="A8YY76"/>
<dbReference type="KEGG" id="sax:USA300HOU_2099"/>
<dbReference type="HOGENOM" id="CLU_041018_2_3_9"/>
<dbReference type="GO" id="GO:0005886">
    <property type="term" value="C:plasma membrane"/>
    <property type="evidence" value="ECO:0007669"/>
    <property type="project" value="UniProtKB-SubCell"/>
</dbReference>
<dbReference type="GO" id="GO:0045259">
    <property type="term" value="C:proton-transporting ATP synthase complex"/>
    <property type="evidence" value="ECO:0007669"/>
    <property type="project" value="UniProtKB-KW"/>
</dbReference>
<dbReference type="GO" id="GO:0046933">
    <property type="term" value="F:proton-transporting ATP synthase activity, rotational mechanism"/>
    <property type="evidence" value="ECO:0007669"/>
    <property type="project" value="UniProtKB-UniRule"/>
</dbReference>
<dbReference type="GO" id="GO:0042777">
    <property type="term" value="P:proton motive force-driven plasma membrane ATP synthesis"/>
    <property type="evidence" value="ECO:0007669"/>
    <property type="project" value="TreeGrafter"/>
</dbReference>
<dbReference type="CDD" id="cd00310">
    <property type="entry name" value="ATP-synt_Fo_a_6"/>
    <property type="match status" value="1"/>
</dbReference>
<dbReference type="FunFam" id="1.20.120.220:FF:000005">
    <property type="entry name" value="ATP synthase subunit a"/>
    <property type="match status" value="1"/>
</dbReference>
<dbReference type="Gene3D" id="1.20.120.220">
    <property type="entry name" value="ATP synthase, F0 complex, subunit A"/>
    <property type="match status" value="1"/>
</dbReference>
<dbReference type="HAMAP" id="MF_01393">
    <property type="entry name" value="ATP_synth_a_bact"/>
    <property type="match status" value="1"/>
</dbReference>
<dbReference type="InterPro" id="IPR045082">
    <property type="entry name" value="ATP_syn_F0_a_bact/chloroplast"/>
</dbReference>
<dbReference type="InterPro" id="IPR000568">
    <property type="entry name" value="ATP_synth_F0_asu"/>
</dbReference>
<dbReference type="InterPro" id="IPR023011">
    <property type="entry name" value="ATP_synth_F0_asu_AS"/>
</dbReference>
<dbReference type="InterPro" id="IPR035908">
    <property type="entry name" value="F0_ATP_A_sf"/>
</dbReference>
<dbReference type="NCBIfam" id="TIGR01131">
    <property type="entry name" value="ATP_synt_6_or_A"/>
    <property type="match status" value="1"/>
</dbReference>
<dbReference type="NCBIfam" id="NF004479">
    <property type="entry name" value="PRK05815.1-4"/>
    <property type="match status" value="1"/>
</dbReference>
<dbReference type="PANTHER" id="PTHR42823">
    <property type="entry name" value="ATP SYNTHASE SUBUNIT A, CHLOROPLASTIC"/>
    <property type="match status" value="1"/>
</dbReference>
<dbReference type="PANTHER" id="PTHR42823:SF3">
    <property type="entry name" value="ATP SYNTHASE SUBUNIT A, CHLOROPLASTIC"/>
    <property type="match status" value="1"/>
</dbReference>
<dbReference type="Pfam" id="PF00119">
    <property type="entry name" value="ATP-synt_A"/>
    <property type="match status" value="1"/>
</dbReference>
<dbReference type="PRINTS" id="PR00123">
    <property type="entry name" value="ATPASEA"/>
</dbReference>
<dbReference type="SUPFAM" id="SSF81336">
    <property type="entry name" value="F1F0 ATP synthase subunit A"/>
    <property type="match status" value="1"/>
</dbReference>
<dbReference type="PROSITE" id="PS00449">
    <property type="entry name" value="ATPASE_A"/>
    <property type="match status" value="1"/>
</dbReference>
<name>ATP6_STAAT</name>
<organism>
    <name type="scientific">Staphylococcus aureus (strain USA300 / TCH1516)</name>
    <dbReference type="NCBI Taxonomy" id="451516"/>
    <lineage>
        <taxon>Bacteria</taxon>
        <taxon>Bacillati</taxon>
        <taxon>Bacillota</taxon>
        <taxon>Bacilli</taxon>
        <taxon>Bacillales</taxon>
        <taxon>Staphylococcaceae</taxon>
        <taxon>Staphylococcus</taxon>
    </lineage>
</organism>
<sequence length="242" mass="27630">MDHKSPLVSWNLFGFDIVFNLSSILMILVTAFLVFLLAIICTRNLKKRPTGKQNFVEWIFDFVRGIIEGNMAWKKGGQFHFLAVTLILYIFIANMLGLPFSIVTKDHTLWWKSPTADATVTLTLSTTIILLTHFYGIKMRGTKQYLKGYVQPFWPLAIINVFEEFTSTLTLGLRLYGNIFAGEILLTLLAGLFFNEPAWGWIISIPGLIVWQAFSIFVGTIQAYIFIMLSMVYMSHKVADEH</sequence>
<gene>
    <name evidence="1" type="primary">atpB</name>
    <name type="ordered locus">USA300HOU_2099</name>
</gene>
<reference key="1">
    <citation type="journal article" date="2007" name="BMC Microbiol.">
        <title>Subtle genetic changes enhance virulence of methicillin resistant and sensitive Staphylococcus aureus.</title>
        <authorList>
            <person name="Highlander S.K."/>
            <person name="Hulten K.G."/>
            <person name="Qin X."/>
            <person name="Jiang H."/>
            <person name="Yerrapragada S."/>
            <person name="Mason E.O. Jr."/>
            <person name="Shang Y."/>
            <person name="Williams T.M."/>
            <person name="Fortunov R.M."/>
            <person name="Liu Y."/>
            <person name="Igboeli O."/>
            <person name="Petrosino J."/>
            <person name="Tirumalai M."/>
            <person name="Uzman A."/>
            <person name="Fox G.E."/>
            <person name="Cardenas A.M."/>
            <person name="Muzny D.M."/>
            <person name="Hemphill L."/>
            <person name="Ding Y."/>
            <person name="Dugan S."/>
            <person name="Blyth P.R."/>
            <person name="Buhay C.J."/>
            <person name="Dinh H.H."/>
            <person name="Hawes A.C."/>
            <person name="Holder M."/>
            <person name="Kovar C.L."/>
            <person name="Lee S.L."/>
            <person name="Liu W."/>
            <person name="Nazareth L.V."/>
            <person name="Wang Q."/>
            <person name="Zhou J."/>
            <person name="Kaplan S.L."/>
            <person name="Weinstock G.M."/>
        </authorList>
    </citation>
    <scope>NUCLEOTIDE SEQUENCE [LARGE SCALE GENOMIC DNA]</scope>
    <source>
        <strain>USA300 / TCH1516</strain>
    </source>
</reference>
<protein>
    <recommendedName>
        <fullName evidence="1">ATP synthase subunit a</fullName>
    </recommendedName>
    <alternativeName>
        <fullName evidence="1">ATP synthase F0 sector subunit a</fullName>
    </alternativeName>
    <alternativeName>
        <fullName evidence="1">F-ATPase subunit 6</fullName>
    </alternativeName>
</protein>
<feature type="chain" id="PRO_1000145316" description="ATP synthase subunit a">
    <location>
        <begin position="1"/>
        <end position="242"/>
    </location>
</feature>
<feature type="transmembrane region" description="Helical" evidence="1">
    <location>
        <begin position="21"/>
        <end position="41"/>
    </location>
</feature>
<feature type="transmembrane region" description="Helical" evidence="1">
    <location>
        <begin position="83"/>
        <end position="103"/>
    </location>
</feature>
<feature type="transmembrane region" description="Helical" evidence="1">
    <location>
        <begin position="117"/>
        <end position="137"/>
    </location>
</feature>
<feature type="transmembrane region" description="Helical" evidence="1">
    <location>
        <begin position="175"/>
        <end position="195"/>
    </location>
</feature>
<feature type="transmembrane region" description="Helical" evidence="1">
    <location>
        <begin position="198"/>
        <end position="218"/>
    </location>
</feature>
<proteinExistence type="inferred from homology"/>
<keyword id="KW-0066">ATP synthesis</keyword>
<keyword id="KW-1003">Cell membrane</keyword>
<keyword id="KW-0138">CF(0)</keyword>
<keyword id="KW-0375">Hydrogen ion transport</keyword>
<keyword id="KW-0406">Ion transport</keyword>
<keyword id="KW-0472">Membrane</keyword>
<keyword id="KW-0812">Transmembrane</keyword>
<keyword id="KW-1133">Transmembrane helix</keyword>
<keyword id="KW-0813">Transport</keyword>